<keyword id="KW-0963">Cytoplasm</keyword>
<keyword id="KW-0489">Methyltransferase</keyword>
<keyword id="KW-0949">S-adenosyl-L-methionine</keyword>
<keyword id="KW-0808">Transferase</keyword>
<sequence length="293" mass="31970">MPWIQLKLNTTGANAEELSDALMEAGAVSITFQDTHDTPVFEPLPGETRLWGDTDVIGLFDAETDMKDVVAILEQHPLLGAGFAHKIEQLEDKDWEREWMDNFHPMRFGERLWICPSWRDIPDENAVNVMLDPGLAFGTGTHPTTSLCLQWLDGLDLNGKTVIDFGCGSGILAIAALKLGAAKAIGIDIDPQAIQASRDNAERNGVSDRLELYLPKDQPEAMKADVVVANILAGPLRELAPLISVLPVEGGLLGLSGILASQAESVCDAYAELFTLDPVVEKEEWCRITGRKK</sequence>
<feature type="chain" id="PRO_1000046081" description="Ribosomal protein L11 methyltransferase">
    <location>
        <begin position="1"/>
        <end position="293"/>
    </location>
</feature>
<feature type="binding site" evidence="1">
    <location>
        <position position="145"/>
    </location>
    <ligand>
        <name>S-adenosyl-L-methionine</name>
        <dbReference type="ChEBI" id="CHEBI:59789"/>
    </ligand>
</feature>
<feature type="binding site" evidence="1">
    <location>
        <position position="166"/>
    </location>
    <ligand>
        <name>S-adenosyl-L-methionine</name>
        <dbReference type="ChEBI" id="CHEBI:59789"/>
    </ligand>
</feature>
<feature type="binding site" evidence="1">
    <location>
        <position position="188"/>
    </location>
    <ligand>
        <name>S-adenosyl-L-methionine</name>
        <dbReference type="ChEBI" id="CHEBI:59789"/>
    </ligand>
</feature>
<feature type="binding site" evidence="1">
    <location>
        <position position="230"/>
    </location>
    <ligand>
        <name>S-adenosyl-L-methionine</name>
        <dbReference type="ChEBI" id="CHEBI:59789"/>
    </ligand>
</feature>
<dbReference type="EC" id="2.1.1.-" evidence="1"/>
<dbReference type="EMBL" id="AE017220">
    <property type="protein sequence ID" value="AAX67227.1"/>
    <property type="molecule type" value="Genomic_DNA"/>
</dbReference>
<dbReference type="RefSeq" id="WP_001145849.1">
    <property type="nucleotide sequence ID" value="NC_006905.1"/>
</dbReference>
<dbReference type="SMR" id="Q57J85"/>
<dbReference type="KEGG" id="sec:SCH_3321"/>
<dbReference type="HOGENOM" id="CLU_049382_4_1_6"/>
<dbReference type="Proteomes" id="UP000000538">
    <property type="component" value="Chromosome"/>
</dbReference>
<dbReference type="GO" id="GO:0005829">
    <property type="term" value="C:cytosol"/>
    <property type="evidence" value="ECO:0007669"/>
    <property type="project" value="TreeGrafter"/>
</dbReference>
<dbReference type="GO" id="GO:0016279">
    <property type="term" value="F:protein-lysine N-methyltransferase activity"/>
    <property type="evidence" value="ECO:0007669"/>
    <property type="project" value="TreeGrafter"/>
</dbReference>
<dbReference type="GO" id="GO:0032259">
    <property type="term" value="P:methylation"/>
    <property type="evidence" value="ECO:0007669"/>
    <property type="project" value="UniProtKB-KW"/>
</dbReference>
<dbReference type="CDD" id="cd02440">
    <property type="entry name" value="AdoMet_MTases"/>
    <property type="match status" value="1"/>
</dbReference>
<dbReference type="FunFam" id="3.40.50.150:FF:000021">
    <property type="entry name" value="Ribosomal protein L11 methyltransferase"/>
    <property type="match status" value="1"/>
</dbReference>
<dbReference type="Gene3D" id="3.40.50.150">
    <property type="entry name" value="Vaccinia Virus protein VP39"/>
    <property type="match status" value="1"/>
</dbReference>
<dbReference type="HAMAP" id="MF_00735">
    <property type="entry name" value="Methyltr_PrmA"/>
    <property type="match status" value="1"/>
</dbReference>
<dbReference type="InterPro" id="IPR050078">
    <property type="entry name" value="Ribosomal_L11_MeTrfase_PrmA"/>
</dbReference>
<dbReference type="InterPro" id="IPR004498">
    <property type="entry name" value="Ribosomal_PrmA_MeTrfase"/>
</dbReference>
<dbReference type="InterPro" id="IPR029063">
    <property type="entry name" value="SAM-dependent_MTases_sf"/>
</dbReference>
<dbReference type="NCBIfam" id="TIGR00406">
    <property type="entry name" value="prmA"/>
    <property type="match status" value="1"/>
</dbReference>
<dbReference type="PANTHER" id="PTHR43648">
    <property type="entry name" value="ELECTRON TRANSFER FLAVOPROTEIN BETA SUBUNIT LYSINE METHYLTRANSFERASE"/>
    <property type="match status" value="1"/>
</dbReference>
<dbReference type="PANTHER" id="PTHR43648:SF1">
    <property type="entry name" value="ELECTRON TRANSFER FLAVOPROTEIN BETA SUBUNIT LYSINE METHYLTRANSFERASE"/>
    <property type="match status" value="1"/>
</dbReference>
<dbReference type="Pfam" id="PF06325">
    <property type="entry name" value="PrmA"/>
    <property type="match status" value="1"/>
</dbReference>
<dbReference type="PIRSF" id="PIRSF000401">
    <property type="entry name" value="RPL11_MTase"/>
    <property type="match status" value="1"/>
</dbReference>
<dbReference type="SUPFAM" id="SSF53335">
    <property type="entry name" value="S-adenosyl-L-methionine-dependent methyltransferases"/>
    <property type="match status" value="1"/>
</dbReference>
<evidence type="ECO:0000255" key="1">
    <source>
        <dbReference type="HAMAP-Rule" id="MF_00735"/>
    </source>
</evidence>
<organism>
    <name type="scientific">Salmonella choleraesuis (strain SC-B67)</name>
    <dbReference type="NCBI Taxonomy" id="321314"/>
    <lineage>
        <taxon>Bacteria</taxon>
        <taxon>Pseudomonadati</taxon>
        <taxon>Pseudomonadota</taxon>
        <taxon>Gammaproteobacteria</taxon>
        <taxon>Enterobacterales</taxon>
        <taxon>Enterobacteriaceae</taxon>
        <taxon>Salmonella</taxon>
    </lineage>
</organism>
<gene>
    <name evidence="1" type="primary">prmA</name>
    <name type="ordered locus">SCH_3321</name>
</gene>
<name>PRMA_SALCH</name>
<accession>Q57J85</accession>
<reference key="1">
    <citation type="journal article" date="2005" name="Nucleic Acids Res.">
        <title>The genome sequence of Salmonella enterica serovar Choleraesuis, a highly invasive and resistant zoonotic pathogen.</title>
        <authorList>
            <person name="Chiu C.-H."/>
            <person name="Tang P."/>
            <person name="Chu C."/>
            <person name="Hu S."/>
            <person name="Bao Q."/>
            <person name="Yu J."/>
            <person name="Chou Y.-Y."/>
            <person name="Wang H.-S."/>
            <person name="Lee Y.-S."/>
        </authorList>
    </citation>
    <scope>NUCLEOTIDE SEQUENCE [LARGE SCALE GENOMIC DNA]</scope>
    <source>
        <strain>SC-B67</strain>
    </source>
</reference>
<protein>
    <recommendedName>
        <fullName evidence="1">Ribosomal protein L11 methyltransferase</fullName>
        <shortName evidence="1">L11 Mtase</shortName>
        <ecNumber evidence="1">2.1.1.-</ecNumber>
    </recommendedName>
</protein>
<comment type="function">
    <text evidence="1">Methylates ribosomal protein L11.</text>
</comment>
<comment type="catalytic activity">
    <reaction evidence="1">
        <text>L-lysyl-[protein] + 3 S-adenosyl-L-methionine = N(6),N(6),N(6)-trimethyl-L-lysyl-[protein] + 3 S-adenosyl-L-homocysteine + 3 H(+)</text>
        <dbReference type="Rhea" id="RHEA:54192"/>
        <dbReference type="Rhea" id="RHEA-COMP:9752"/>
        <dbReference type="Rhea" id="RHEA-COMP:13826"/>
        <dbReference type="ChEBI" id="CHEBI:15378"/>
        <dbReference type="ChEBI" id="CHEBI:29969"/>
        <dbReference type="ChEBI" id="CHEBI:57856"/>
        <dbReference type="ChEBI" id="CHEBI:59789"/>
        <dbReference type="ChEBI" id="CHEBI:61961"/>
    </reaction>
</comment>
<comment type="subcellular location">
    <subcellularLocation>
        <location evidence="1">Cytoplasm</location>
    </subcellularLocation>
</comment>
<comment type="similarity">
    <text evidence="1">Belongs to the methyltransferase superfamily. PrmA family.</text>
</comment>
<proteinExistence type="inferred from homology"/>